<evidence type="ECO:0000255" key="1">
    <source>
        <dbReference type="HAMAP-Rule" id="MF_00374"/>
    </source>
</evidence>
<evidence type="ECO:0000305" key="2"/>
<reference key="1">
    <citation type="submission" date="2007-03" db="EMBL/GenBank/DDBJ databases">
        <title>Complete sequence of Desulfotomaculum reducens MI-1.</title>
        <authorList>
            <consortium name="US DOE Joint Genome Institute"/>
            <person name="Copeland A."/>
            <person name="Lucas S."/>
            <person name="Lapidus A."/>
            <person name="Barry K."/>
            <person name="Detter J.C."/>
            <person name="Glavina del Rio T."/>
            <person name="Hammon N."/>
            <person name="Israni S."/>
            <person name="Dalin E."/>
            <person name="Tice H."/>
            <person name="Pitluck S."/>
            <person name="Sims D."/>
            <person name="Brettin T."/>
            <person name="Bruce D."/>
            <person name="Han C."/>
            <person name="Tapia R."/>
            <person name="Schmutz J."/>
            <person name="Larimer F."/>
            <person name="Land M."/>
            <person name="Hauser L."/>
            <person name="Kyrpides N."/>
            <person name="Kim E."/>
            <person name="Tebo B.M."/>
            <person name="Richardson P."/>
        </authorList>
    </citation>
    <scope>NUCLEOTIDE SEQUENCE [LARGE SCALE GENOMIC DNA]</scope>
    <source>
        <strain>ATCC BAA-1160 / DSM 100696 / MI-1</strain>
    </source>
</reference>
<sequence length="65" mass="7627">MKVKELRDLTDAELAKKIDDSKDELFKLRFQLATGQLDNPMKIKDVKRNIARLKTIETERKLGIR</sequence>
<dbReference type="EMBL" id="CP000612">
    <property type="protein sequence ID" value="ABO48772.1"/>
    <property type="molecule type" value="Genomic_DNA"/>
</dbReference>
<dbReference type="RefSeq" id="WP_011876612.1">
    <property type="nucleotide sequence ID" value="NC_009253.1"/>
</dbReference>
<dbReference type="SMR" id="A4J119"/>
<dbReference type="STRING" id="349161.Dred_0223"/>
<dbReference type="KEGG" id="drm:Dred_0223"/>
<dbReference type="eggNOG" id="COG0255">
    <property type="taxonomic scope" value="Bacteria"/>
</dbReference>
<dbReference type="HOGENOM" id="CLU_158491_5_2_9"/>
<dbReference type="OrthoDB" id="9815192at2"/>
<dbReference type="Proteomes" id="UP000001556">
    <property type="component" value="Chromosome"/>
</dbReference>
<dbReference type="GO" id="GO:0022625">
    <property type="term" value="C:cytosolic large ribosomal subunit"/>
    <property type="evidence" value="ECO:0007669"/>
    <property type="project" value="TreeGrafter"/>
</dbReference>
<dbReference type="GO" id="GO:0003735">
    <property type="term" value="F:structural constituent of ribosome"/>
    <property type="evidence" value="ECO:0007669"/>
    <property type="project" value="InterPro"/>
</dbReference>
<dbReference type="GO" id="GO:0006412">
    <property type="term" value="P:translation"/>
    <property type="evidence" value="ECO:0007669"/>
    <property type="project" value="UniProtKB-UniRule"/>
</dbReference>
<dbReference type="CDD" id="cd00427">
    <property type="entry name" value="Ribosomal_L29_HIP"/>
    <property type="match status" value="1"/>
</dbReference>
<dbReference type="FunFam" id="1.10.287.310:FF:000001">
    <property type="entry name" value="50S ribosomal protein L29"/>
    <property type="match status" value="1"/>
</dbReference>
<dbReference type="Gene3D" id="1.10.287.310">
    <property type="match status" value="1"/>
</dbReference>
<dbReference type="HAMAP" id="MF_00374">
    <property type="entry name" value="Ribosomal_uL29"/>
    <property type="match status" value="1"/>
</dbReference>
<dbReference type="InterPro" id="IPR050063">
    <property type="entry name" value="Ribosomal_protein_uL29"/>
</dbReference>
<dbReference type="InterPro" id="IPR001854">
    <property type="entry name" value="Ribosomal_uL29"/>
</dbReference>
<dbReference type="InterPro" id="IPR018254">
    <property type="entry name" value="Ribosomal_uL29_CS"/>
</dbReference>
<dbReference type="InterPro" id="IPR036049">
    <property type="entry name" value="Ribosomal_uL29_sf"/>
</dbReference>
<dbReference type="NCBIfam" id="TIGR00012">
    <property type="entry name" value="L29"/>
    <property type="match status" value="1"/>
</dbReference>
<dbReference type="PANTHER" id="PTHR10916">
    <property type="entry name" value="60S RIBOSOMAL PROTEIN L35/50S RIBOSOMAL PROTEIN L29"/>
    <property type="match status" value="1"/>
</dbReference>
<dbReference type="PANTHER" id="PTHR10916:SF0">
    <property type="entry name" value="LARGE RIBOSOMAL SUBUNIT PROTEIN UL29C"/>
    <property type="match status" value="1"/>
</dbReference>
<dbReference type="Pfam" id="PF00831">
    <property type="entry name" value="Ribosomal_L29"/>
    <property type="match status" value="1"/>
</dbReference>
<dbReference type="SUPFAM" id="SSF46561">
    <property type="entry name" value="Ribosomal protein L29 (L29p)"/>
    <property type="match status" value="1"/>
</dbReference>
<dbReference type="PROSITE" id="PS00579">
    <property type="entry name" value="RIBOSOMAL_L29"/>
    <property type="match status" value="1"/>
</dbReference>
<keyword id="KW-1185">Reference proteome</keyword>
<keyword id="KW-0687">Ribonucleoprotein</keyword>
<keyword id="KW-0689">Ribosomal protein</keyword>
<protein>
    <recommendedName>
        <fullName evidence="1">Large ribosomal subunit protein uL29</fullName>
    </recommendedName>
    <alternativeName>
        <fullName evidence="2">50S ribosomal protein L29</fullName>
    </alternativeName>
</protein>
<gene>
    <name evidence="1" type="primary">rpmC</name>
    <name type="ordered locus">Dred_0223</name>
</gene>
<name>RL29_DESRM</name>
<accession>A4J119</accession>
<organism>
    <name type="scientific">Desulforamulus reducens (strain ATCC BAA-1160 / DSM 100696 / MI-1)</name>
    <name type="common">Desulfotomaculum reducens</name>
    <dbReference type="NCBI Taxonomy" id="349161"/>
    <lineage>
        <taxon>Bacteria</taxon>
        <taxon>Bacillati</taxon>
        <taxon>Bacillota</taxon>
        <taxon>Clostridia</taxon>
        <taxon>Eubacteriales</taxon>
        <taxon>Peptococcaceae</taxon>
        <taxon>Desulforamulus</taxon>
    </lineage>
</organism>
<feature type="chain" id="PRO_1000072142" description="Large ribosomal subunit protein uL29">
    <location>
        <begin position="1"/>
        <end position="65"/>
    </location>
</feature>
<comment type="similarity">
    <text evidence="1">Belongs to the universal ribosomal protein uL29 family.</text>
</comment>
<proteinExistence type="inferred from homology"/>